<feature type="transit peptide" description="Mitochondrion" evidence="1">
    <location>
        <begin position="1"/>
        <end position="75"/>
    </location>
</feature>
<feature type="chain" id="PRO_0000452962" description="Acyl-coenzyme A thioesterase 4, mitochondrial" evidence="1">
    <location>
        <begin position="76"/>
        <end position="527"/>
    </location>
</feature>
<feature type="domain" description="HotDog ACOT-type 1" evidence="2">
    <location>
        <begin position="172"/>
        <end position="294"/>
    </location>
</feature>
<feature type="domain" description="HotDog ACOT-type 2" evidence="2">
    <location>
        <begin position="370"/>
        <end position="487"/>
    </location>
</feature>
<protein>
    <recommendedName>
        <fullName evidence="4">Acyl-coenzyme A thioesterase 4, mitochondrial</fullName>
        <shortName evidence="4">Acyl-CoA thioesterase 4</shortName>
        <shortName evidence="4">HlTE4</shortName>
        <ecNumber evidence="3">3.1.2.-</ecNumber>
    </recommendedName>
    <alternativeName>
        <fullName evidence="6">2-methylbutanoyl-CoA hydrolase TE4</fullName>
        <ecNumber evidence="3">3.1.2.-</ecNumber>
    </alternativeName>
    <alternativeName>
        <fullName evidence="6">2-methylpropanoyl-CoA hydrolase TE4</fullName>
        <ecNumber evidence="3">3.1.2.-</ecNumber>
    </alternativeName>
    <alternativeName>
        <fullName evidence="6">3-methylbutanoyl-CoA hydrolase TE4</fullName>
        <ecNumber evidence="3">3.1.2.-</ecNumber>
    </alternativeName>
    <alternativeName>
        <fullName evidence="4">Acyl-CoA thioester hydrolase 4</fullName>
    </alternativeName>
    <alternativeName>
        <fullName evidence="6">Butanoyl-CoA hydrolase TE4</fullName>
        <ecNumber evidence="3">3.1.2.-</ecNumber>
    </alternativeName>
    <alternativeName>
        <fullName evidence="6">Propanoyl-CoA hydrolase TE4</fullName>
        <ecNumber evidence="3">3.1.2.-</ecNumber>
    </alternativeName>
</protein>
<comment type="function">
    <text evidence="3">Acyl-CoA thioesterases are a group of enzymes that catalyze the hydrolysis of acyl-CoAs to the free fatty acid and coenzyme A (CoASH), providing the potential to regulate intracellular levels of acyl-CoAs, free fatty acids and CoASH (PubMed:23300257). Active on acyl CoAs with short chains (propanoyl-CoA and butanoyl-CoA), branched short chains (2-methylpropanoyl-CoA, 2-methylbutanoyl-CoA and 3-methylbutanoyl-CoA) and medium chains (octanoyl-CoA) (PubMed:23300257).</text>
</comment>
<comment type="catalytic activity">
    <reaction evidence="3">
        <text>2-methylpropanoyl-CoA + H2O = 2-methylpropanoate + CoA + H(+)</text>
        <dbReference type="Rhea" id="RHEA:40799"/>
        <dbReference type="ChEBI" id="CHEBI:15377"/>
        <dbReference type="ChEBI" id="CHEBI:15378"/>
        <dbReference type="ChEBI" id="CHEBI:48944"/>
        <dbReference type="ChEBI" id="CHEBI:57287"/>
        <dbReference type="ChEBI" id="CHEBI:57338"/>
    </reaction>
    <physiologicalReaction direction="left-to-right" evidence="3">
        <dbReference type="Rhea" id="RHEA:40800"/>
    </physiologicalReaction>
</comment>
<comment type="catalytic activity">
    <reaction evidence="3">
        <text>propanoyl-CoA + H2O = propanoate + CoA + H(+)</text>
        <dbReference type="Rhea" id="RHEA:40103"/>
        <dbReference type="ChEBI" id="CHEBI:15377"/>
        <dbReference type="ChEBI" id="CHEBI:15378"/>
        <dbReference type="ChEBI" id="CHEBI:17272"/>
        <dbReference type="ChEBI" id="CHEBI:57287"/>
        <dbReference type="ChEBI" id="CHEBI:57392"/>
    </reaction>
    <physiologicalReaction direction="left-to-right" evidence="3">
        <dbReference type="Rhea" id="RHEA:40104"/>
    </physiologicalReaction>
</comment>
<comment type="catalytic activity">
    <reaction evidence="3">
        <text>octanoyl-CoA + H2O = octanoate + CoA + H(+)</text>
        <dbReference type="Rhea" id="RHEA:30143"/>
        <dbReference type="ChEBI" id="CHEBI:15377"/>
        <dbReference type="ChEBI" id="CHEBI:15378"/>
        <dbReference type="ChEBI" id="CHEBI:25646"/>
        <dbReference type="ChEBI" id="CHEBI:57287"/>
        <dbReference type="ChEBI" id="CHEBI:57386"/>
    </reaction>
    <physiologicalReaction direction="left-to-right" evidence="3">
        <dbReference type="Rhea" id="RHEA:30144"/>
    </physiologicalReaction>
</comment>
<comment type="catalytic activity">
    <reaction evidence="3">
        <text>butanoyl-CoA + H2O = butanoate + CoA + H(+)</text>
        <dbReference type="Rhea" id="RHEA:40111"/>
        <dbReference type="ChEBI" id="CHEBI:15377"/>
        <dbReference type="ChEBI" id="CHEBI:15378"/>
        <dbReference type="ChEBI" id="CHEBI:17968"/>
        <dbReference type="ChEBI" id="CHEBI:57287"/>
        <dbReference type="ChEBI" id="CHEBI:57371"/>
    </reaction>
    <physiologicalReaction direction="left-to-right" evidence="3">
        <dbReference type="Rhea" id="RHEA:40112"/>
    </physiologicalReaction>
</comment>
<comment type="catalytic activity">
    <reaction evidence="3">
        <text>3-methylbutanoyl-CoA + H2O = 3-methylbutanoate + CoA + H(+)</text>
        <dbReference type="Rhea" id="RHEA:66984"/>
        <dbReference type="ChEBI" id="CHEBI:15377"/>
        <dbReference type="ChEBI" id="CHEBI:15378"/>
        <dbReference type="ChEBI" id="CHEBI:48942"/>
        <dbReference type="ChEBI" id="CHEBI:57287"/>
        <dbReference type="ChEBI" id="CHEBI:57345"/>
    </reaction>
    <physiologicalReaction direction="left-to-right" evidence="3">
        <dbReference type="Rhea" id="RHEA:66985"/>
    </physiologicalReaction>
</comment>
<comment type="catalytic activity">
    <reaction evidence="3">
        <text>2-methylbutanoyl-CoA + H2O = 2-methylbutanoate + CoA + H(+)</text>
        <dbReference type="Rhea" id="RHEA:66980"/>
        <dbReference type="ChEBI" id="CHEBI:15377"/>
        <dbReference type="ChEBI" id="CHEBI:15378"/>
        <dbReference type="ChEBI" id="CHEBI:48946"/>
        <dbReference type="ChEBI" id="CHEBI:57287"/>
        <dbReference type="ChEBI" id="CHEBI:57336"/>
    </reaction>
    <physiologicalReaction direction="left-to-right" evidence="3">
        <dbReference type="Rhea" id="RHEA:66981"/>
    </physiologicalReaction>
</comment>
<comment type="biophysicochemical properties">
    <kinetics>
        <KM evidence="3">979 uM for 2-methylpropanoyl-CoA</KM>
        <KM evidence="3">513 uM for 3-methylbutanoyl-CoA</KM>
        <text evidence="3">kcat is 135 min(-1) with 2-methylpropanoyl-CoA as substrate (PubMed:23300257). kcat is 120.6 min(-1) with 3-methylbutanoyl-CoA as substrate (PubMed:23300257).</text>
    </kinetics>
</comment>
<comment type="subcellular location">
    <subcellularLocation>
        <location evidence="3">Mitochondrion</location>
    </subcellularLocation>
</comment>
<comment type="tissue specificity">
    <text evidence="3">Mostly expressed at low levels in glandular trichomes (lupulin glands), and, to a lower extent, in stems, leaves, flowers and cones.</text>
</comment>
<comment type="similarity">
    <text evidence="5">Belongs to the acyl coenzyme A hydrolase family.</text>
</comment>
<gene>
    <name evidence="4" type="primary">TE4</name>
</gene>
<accession>S4TF94</accession>
<proteinExistence type="evidence at protein level"/>
<dbReference type="EC" id="3.1.2.-" evidence="3"/>
<dbReference type="EMBL" id="JX878394">
    <property type="protein sequence ID" value="AGA17934.1"/>
    <property type="molecule type" value="mRNA"/>
</dbReference>
<dbReference type="SMR" id="S4TF94"/>
<dbReference type="GO" id="GO:0005739">
    <property type="term" value="C:mitochondrion"/>
    <property type="evidence" value="ECO:0000314"/>
    <property type="project" value="UniProtKB"/>
</dbReference>
<dbReference type="GO" id="GO:0047617">
    <property type="term" value="F:fatty acyl-CoA hydrolase activity"/>
    <property type="evidence" value="ECO:0007669"/>
    <property type="project" value="TreeGrafter"/>
</dbReference>
<dbReference type="GO" id="GO:0006637">
    <property type="term" value="P:acyl-CoA metabolic process"/>
    <property type="evidence" value="ECO:0007669"/>
    <property type="project" value="TreeGrafter"/>
</dbReference>
<dbReference type="CDD" id="cd03442">
    <property type="entry name" value="BFIT_BACH"/>
    <property type="match status" value="2"/>
</dbReference>
<dbReference type="FunFam" id="3.10.129.10:FF:000032">
    <property type="entry name" value="Acyl-CoA thioester hydrolase"/>
    <property type="match status" value="1"/>
</dbReference>
<dbReference type="FunFam" id="3.10.129.10:FF:000023">
    <property type="entry name" value="Acyl-coenzyme A thioesterase 9, mitochondrial"/>
    <property type="match status" value="1"/>
</dbReference>
<dbReference type="Gene3D" id="3.10.129.10">
    <property type="entry name" value="Hotdog Thioesterase"/>
    <property type="match status" value="2"/>
</dbReference>
<dbReference type="InterPro" id="IPR033120">
    <property type="entry name" value="HOTDOG_ACOT"/>
</dbReference>
<dbReference type="InterPro" id="IPR029069">
    <property type="entry name" value="HotDog_dom_sf"/>
</dbReference>
<dbReference type="PANTHER" id="PTHR12655">
    <property type="entry name" value="ACYL-COA THIOESTERASE"/>
    <property type="match status" value="1"/>
</dbReference>
<dbReference type="PANTHER" id="PTHR12655:SF3">
    <property type="entry name" value="ACYL-COENZYME A THIOESTERASE 9, MITOCHONDRIAL-LIKE ISOFORM X1"/>
    <property type="match status" value="1"/>
</dbReference>
<dbReference type="SUPFAM" id="SSF54637">
    <property type="entry name" value="Thioesterase/thiol ester dehydrase-isomerase"/>
    <property type="match status" value="2"/>
</dbReference>
<dbReference type="PROSITE" id="PS51770">
    <property type="entry name" value="HOTDOG_ACOT"/>
    <property type="match status" value="2"/>
</dbReference>
<name>TE4_HUMLU</name>
<sequence>MMTPIGIRIRKQIPLSYHYSSIQALLSRFTPTPYNPISNSSSSTQTIPTQFHESQCTNPISRPTVFLFDPPPIRFTHTKSFSTDPSSLDFPSNQPPVVSTISSHHNISQPIDAGSSIRKPISLWPGMFNSPVTNALWEARSNMFEKYGEPTADPPSQSELVTKSPAQSRTSILYNLSSDYALREHYRNPWNMIRIGKLLEDLDALAGTIAFKHCTNEDGMSRPLLLVTASVDKMVLKKPISIDTDLSIVGAVTWVGRSSMEIQLQVLQTTHESSDPSDSVSLVANFTFVARDSKTGKSAVINQISPETGEEKLLWREADERNKMRKMKRKIQKDLELEKQYIERLNALLAEGRVFCDLPALADRNSILMKDTCLENSFICQPQQRNIYGRIFGGFLMRRAVELAFSTTYSFAGVVTHFLEVDHVDFLRPVDVGDFLRLKSCVLYTELQNPTEPLINVEVVAHVTRPELRSSEVSNKFYFTFSVGPEAVKDGLLVRNVVPATEEEARRVLERMDAETPHPHSQYENEI</sequence>
<organism>
    <name type="scientific">Humulus lupulus</name>
    <name type="common">European hop</name>
    <dbReference type="NCBI Taxonomy" id="3486"/>
    <lineage>
        <taxon>Eukaryota</taxon>
        <taxon>Viridiplantae</taxon>
        <taxon>Streptophyta</taxon>
        <taxon>Embryophyta</taxon>
        <taxon>Tracheophyta</taxon>
        <taxon>Spermatophyta</taxon>
        <taxon>Magnoliopsida</taxon>
        <taxon>eudicotyledons</taxon>
        <taxon>Gunneridae</taxon>
        <taxon>Pentapetalae</taxon>
        <taxon>rosids</taxon>
        <taxon>fabids</taxon>
        <taxon>Rosales</taxon>
        <taxon>Cannabaceae</taxon>
        <taxon>Humulus</taxon>
    </lineage>
</organism>
<reference key="1">
    <citation type="journal article" date="2013" name="Mol. Plant">
        <title>Characterization of the formation of branched short-chain fatty acid:CoAs for bitter acid biosynthesis in hop glandular trichomes.</title>
        <authorList>
            <person name="Xu H."/>
            <person name="Zhang F."/>
            <person name="Liu B."/>
            <person name="Huhman D.V."/>
            <person name="Sumner L.W."/>
            <person name="Dixon R.A."/>
            <person name="Wang G."/>
        </authorList>
    </citation>
    <scope>NUCLEOTIDE SEQUENCE [MRNA]</scope>
    <scope>FUNCTION</scope>
    <scope>TISSUE SPECIFICITY</scope>
    <scope>BIOPHYSICOCHEMICAL PROPERTIES</scope>
    <scope>CATALYTIC ACTIVITY</scope>
    <scope>SUBCELLULAR LOCATION</scope>
    <scope>GENE FAMILY</scope>
    <scope>NOMENCLATURE</scope>
    <source>
        <strain>cv. Nugget</strain>
    </source>
</reference>
<keyword id="KW-0378">Hydrolase</keyword>
<keyword id="KW-0496">Mitochondrion</keyword>
<keyword id="KW-0677">Repeat</keyword>
<keyword id="KW-0809">Transit peptide</keyword>
<evidence type="ECO:0000255" key="1"/>
<evidence type="ECO:0000255" key="2">
    <source>
        <dbReference type="PROSITE-ProRule" id="PRU01106"/>
    </source>
</evidence>
<evidence type="ECO:0000269" key="3">
    <source>
    </source>
</evidence>
<evidence type="ECO:0000303" key="4">
    <source>
    </source>
</evidence>
<evidence type="ECO:0000305" key="5"/>
<evidence type="ECO:0000305" key="6">
    <source>
    </source>
</evidence>